<protein>
    <recommendedName>
        <fullName evidence="1">CinA-like protein</fullName>
    </recommendedName>
</protein>
<dbReference type="EMBL" id="BA000045">
    <property type="protein sequence ID" value="BAC90382.1"/>
    <property type="molecule type" value="Genomic_DNA"/>
</dbReference>
<dbReference type="RefSeq" id="NP_925387.1">
    <property type="nucleotide sequence ID" value="NC_005125.1"/>
</dbReference>
<dbReference type="RefSeq" id="WP_011142436.1">
    <property type="nucleotide sequence ID" value="NC_005125.1"/>
</dbReference>
<dbReference type="SMR" id="Q7NHU4"/>
<dbReference type="FunCoup" id="Q7NHU4">
    <property type="interactions" value="18"/>
</dbReference>
<dbReference type="STRING" id="251221.gene:10759938"/>
<dbReference type="EnsemblBacteria" id="BAC90382">
    <property type="protein sequence ID" value="BAC90382"/>
    <property type="gene ID" value="BAC90382"/>
</dbReference>
<dbReference type="KEGG" id="gvi:glr2441"/>
<dbReference type="PATRIC" id="fig|251221.4.peg.2477"/>
<dbReference type="eggNOG" id="COG1058">
    <property type="taxonomic scope" value="Bacteria"/>
</dbReference>
<dbReference type="eggNOG" id="COG1546">
    <property type="taxonomic scope" value="Bacteria"/>
</dbReference>
<dbReference type="HOGENOM" id="CLU_030805_9_3_3"/>
<dbReference type="InParanoid" id="Q7NHU4"/>
<dbReference type="OrthoDB" id="9801454at2"/>
<dbReference type="PhylomeDB" id="Q7NHU4"/>
<dbReference type="Proteomes" id="UP000000557">
    <property type="component" value="Chromosome"/>
</dbReference>
<dbReference type="CDD" id="cd00885">
    <property type="entry name" value="cinA"/>
    <property type="match status" value="1"/>
</dbReference>
<dbReference type="Gene3D" id="3.30.70.2860">
    <property type="match status" value="1"/>
</dbReference>
<dbReference type="Gene3D" id="3.90.950.20">
    <property type="entry name" value="CinA-like"/>
    <property type="match status" value="1"/>
</dbReference>
<dbReference type="Gene3D" id="3.40.980.10">
    <property type="entry name" value="MoaB/Mog-like domain"/>
    <property type="match status" value="1"/>
</dbReference>
<dbReference type="HAMAP" id="MF_00226_B">
    <property type="entry name" value="CinA_B"/>
    <property type="match status" value="1"/>
</dbReference>
<dbReference type="InterPro" id="IPR050101">
    <property type="entry name" value="CinA"/>
</dbReference>
<dbReference type="InterPro" id="IPR036653">
    <property type="entry name" value="CinA-like_C"/>
</dbReference>
<dbReference type="InterPro" id="IPR008136">
    <property type="entry name" value="CinA_C"/>
</dbReference>
<dbReference type="InterPro" id="IPR041424">
    <property type="entry name" value="CinA_KH"/>
</dbReference>
<dbReference type="InterPro" id="IPR008135">
    <property type="entry name" value="Competence-induced_CinA"/>
</dbReference>
<dbReference type="InterPro" id="IPR036425">
    <property type="entry name" value="MoaB/Mog-like_dom_sf"/>
</dbReference>
<dbReference type="InterPro" id="IPR001453">
    <property type="entry name" value="MoaB/Mog_dom"/>
</dbReference>
<dbReference type="NCBIfam" id="TIGR00200">
    <property type="entry name" value="cinA_nterm"/>
    <property type="match status" value="1"/>
</dbReference>
<dbReference type="NCBIfam" id="TIGR00199">
    <property type="entry name" value="PncC_domain"/>
    <property type="match status" value="1"/>
</dbReference>
<dbReference type="NCBIfam" id="NF001813">
    <property type="entry name" value="PRK00549.1"/>
    <property type="match status" value="1"/>
</dbReference>
<dbReference type="PANTHER" id="PTHR13939">
    <property type="entry name" value="NICOTINAMIDE-NUCLEOTIDE AMIDOHYDROLASE PNCC"/>
    <property type="match status" value="1"/>
</dbReference>
<dbReference type="PANTHER" id="PTHR13939:SF0">
    <property type="entry name" value="NMN AMIDOHYDROLASE-LIKE PROTEIN YFAY"/>
    <property type="match status" value="1"/>
</dbReference>
<dbReference type="Pfam" id="PF02464">
    <property type="entry name" value="CinA"/>
    <property type="match status" value="1"/>
</dbReference>
<dbReference type="Pfam" id="PF18146">
    <property type="entry name" value="CinA_KH"/>
    <property type="match status" value="1"/>
</dbReference>
<dbReference type="Pfam" id="PF00994">
    <property type="entry name" value="MoCF_biosynth"/>
    <property type="match status" value="1"/>
</dbReference>
<dbReference type="PIRSF" id="PIRSF006728">
    <property type="entry name" value="CinA"/>
    <property type="match status" value="1"/>
</dbReference>
<dbReference type="SMART" id="SM00852">
    <property type="entry name" value="MoCF_biosynth"/>
    <property type="match status" value="1"/>
</dbReference>
<dbReference type="SUPFAM" id="SSF142433">
    <property type="entry name" value="CinA-like"/>
    <property type="match status" value="1"/>
</dbReference>
<dbReference type="SUPFAM" id="SSF53218">
    <property type="entry name" value="Molybdenum cofactor biosynthesis proteins"/>
    <property type="match status" value="1"/>
</dbReference>
<organism>
    <name type="scientific">Gloeobacter violaceus (strain ATCC 29082 / PCC 7421)</name>
    <dbReference type="NCBI Taxonomy" id="251221"/>
    <lineage>
        <taxon>Bacteria</taxon>
        <taxon>Bacillati</taxon>
        <taxon>Cyanobacteriota</taxon>
        <taxon>Cyanophyceae</taxon>
        <taxon>Gloeobacterales</taxon>
        <taxon>Gloeobacteraceae</taxon>
        <taxon>Gloeobacter</taxon>
    </lineage>
</organism>
<evidence type="ECO:0000255" key="1">
    <source>
        <dbReference type="HAMAP-Rule" id="MF_00226"/>
    </source>
</evidence>
<keyword id="KW-1185">Reference proteome</keyword>
<feature type="chain" id="PRO_0000156762" description="CinA-like protein">
    <location>
        <begin position="1"/>
        <end position="426"/>
    </location>
</feature>
<comment type="similarity">
    <text evidence="1">Belongs to the CinA family.</text>
</comment>
<accession>Q7NHU4</accession>
<gene>
    <name type="ordered locus">glr2441</name>
</gene>
<proteinExistence type="inferred from homology"/>
<reference key="1">
    <citation type="journal article" date="2003" name="DNA Res.">
        <title>Complete genome structure of Gloeobacter violaceus PCC 7421, a cyanobacterium that lacks thylakoids.</title>
        <authorList>
            <person name="Nakamura Y."/>
            <person name="Kaneko T."/>
            <person name="Sato S."/>
            <person name="Mimuro M."/>
            <person name="Miyashita H."/>
            <person name="Tsuchiya T."/>
            <person name="Sasamoto S."/>
            <person name="Watanabe A."/>
            <person name="Kawashima K."/>
            <person name="Kishida Y."/>
            <person name="Kiyokawa C."/>
            <person name="Kohara M."/>
            <person name="Matsumoto M."/>
            <person name="Matsuno A."/>
            <person name="Nakazaki N."/>
            <person name="Shimpo S."/>
            <person name="Takeuchi C."/>
            <person name="Yamada M."/>
            <person name="Tabata S."/>
        </authorList>
    </citation>
    <scope>NUCLEOTIDE SEQUENCE [LARGE SCALE GENOMIC DNA]</scope>
    <source>
        <strain>ATCC 29082 / PCC 7421</strain>
    </source>
</reference>
<name>CINAL_GLOVI</name>
<sequence>MAPSAEILCIGTELLLGQIVNTNAQFLAVELAKLGIPHHFQTVVGDNPGRIRLALDIAIERAGIILTTGGLGPTDDDLTHQTLAEHFEVPLVRHPALLALIEERFRERNRPMSPTNAKQADLPEGAQILPNPMGTAPGIVWEPKAGVAILTFPGVPAEMRAMWAETAVPFLRLRGGGQEIFHSRTLRHWGVSESTLAEKVEEFLRGVNPTVAPYAGNGEVKLRITARAAGIAAAESLIAPVEASLRTIAGLDCYGADEDTLASASAALLVRTGTTLAVAESCTGGMLAEALTALPGASRYLRGAVVAYANDLKTSLLGVDEQRMIDHGAVSEPVARAMAEGVRNRLASDWGLALTGVSGPGGGTAQKPVGLVHIALAGPGETRAVEIRLGAQRGRDWIRRVSTQSALDLLRREIINWEAFGIMKER</sequence>